<keyword id="KW-0007">Acetylation</keyword>
<keyword id="KW-0966">Cell projection</keyword>
<keyword id="KW-0969">Cilium</keyword>
<keyword id="KW-0970">Cilium biogenesis/degradation</keyword>
<keyword id="KW-0963">Cytoplasm</keyword>
<keyword id="KW-0395">Inflammatory response</keyword>
<keyword id="KW-0597">Phosphoprotein</keyword>
<keyword id="KW-0653">Protein transport</keyword>
<keyword id="KW-1185">Reference proteome</keyword>
<keyword id="KW-0813">Transport</keyword>
<comment type="function">
    <text evidence="1">Regulates the macrophage function, by enhancing the resolution of inflammation and wound repair functions mediated by M2 macrophages. The regulation of macrophage function is, due at least in part, to its ability to inhibit glycolysis. May also play a role in trafficking of proteins via its interaction with UNC119 and UNC119B cargo adapters: may help the release of UNC119 and UNC119B cargo or the recycling of UNC119 and UNC119B. May play a role in ciliary membrane localization via its interaction with UNC119B and protein transport into photoreceptor cells.</text>
</comment>
<comment type="subunit">
    <text evidence="1">Interacts with UNC119 and UNC119B; interaction preferentially takes place when UNC119 and UNC119B are unliganded with myristoylated proteins.</text>
</comment>
<comment type="subcellular location">
    <subcellularLocation>
        <location evidence="1">Cytoplasm</location>
    </subcellularLocation>
    <subcellularLocation>
        <location evidence="1">Cell projection</location>
        <location evidence="1">Cilium</location>
    </subcellularLocation>
    <text evidence="1">Localizes to the transition zone and proximal cilium in addition to being found throughout the cytoplasm.</text>
</comment>
<comment type="tissue specificity">
    <text evidence="3">Highly expressed in photoreceptors.</text>
</comment>
<comment type="similarity">
    <text evidence="4">Belongs to the UNC119-binding protein family.</text>
</comment>
<organism>
    <name type="scientific">Mus musculus</name>
    <name type="common">Mouse</name>
    <dbReference type="NCBI Taxonomy" id="10090"/>
    <lineage>
        <taxon>Eukaryota</taxon>
        <taxon>Metazoa</taxon>
        <taxon>Chordata</taxon>
        <taxon>Craniata</taxon>
        <taxon>Vertebrata</taxon>
        <taxon>Euteleostomi</taxon>
        <taxon>Mammalia</taxon>
        <taxon>Eutheria</taxon>
        <taxon>Euarchontoglires</taxon>
        <taxon>Glires</taxon>
        <taxon>Rodentia</taxon>
        <taxon>Myomorpha</taxon>
        <taxon>Muroidea</taxon>
        <taxon>Muridae</taxon>
        <taxon>Murinae</taxon>
        <taxon>Mus</taxon>
        <taxon>Mus</taxon>
    </lineage>
</organism>
<dbReference type="EMBL" id="AK135656">
    <property type="protein sequence ID" value="BAE22601.1"/>
    <property type="molecule type" value="mRNA"/>
</dbReference>
<dbReference type="EMBL" id="AK137265">
    <property type="protein sequence ID" value="BAE23288.1"/>
    <property type="molecule type" value="mRNA"/>
</dbReference>
<dbReference type="EMBL" id="AK152370">
    <property type="protein sequence ID" value="BAE31160.1"/>
    <property type="molecule type" value="mRNA"/>
</dbReference>
<dbReference type="EMBL" id="AK162223">
    <property type="protein sequence ID" value="BAE36800.1"/>
    <property type="molecule type" value="mRNA"/>
</dbReference>
<dbReference type="EMBL" id="AK168549">
    <property type="protein sequence ID" value="BAE40424.1"/>
    <property type="molecule type" value="mRNA"/>
</dbReference>
<dbReference type="EMBL" id="BC019375">
    <property type="protein sequence ID" value="AAH19375.1"/>
    <property type="molecule type" value="mRNA"/>
</dbReference>
<dbReference type="EMBL" id="BC023951">
    <property type="protein sequence ID" value="AAH23951.1"/>
    <property type="molecule type" value="mRNA"/>
</dbReference>
<dbReference type="CCDS" id="CCDS15202.1"/>
<dbReference type="RefSeq" id="NP_001342000.1">
    <property type="nucleotide sequence ID" value="NM_001355071.1"/>
</dbReference>
<dbReference type="RefSeq" id="NP_001342001.1">
    <property type="nucleotide sequence ID" value="NM_001355072.1"/>
</dbReference>
<dbReference type="RefSeq" id="NP_001342002.1">
    <property type="nucleotide sequence ID" value="NM_001355073.1"/>
</dbReference>
<dbReference type="RefSeq" id="NP_001342003.1">
    <property type="nucleotide sequence ID" value="NM_001355074.1"/>
</dbReference>
<dbReference type="RefSeq" id="NP_598586.1">
    <property type="nucleotide sequence ID" value="NM_133825.3"/>
</dbReference>
<dbReference type="RefSeq" id="XP_006529811.1">
    <property type="nucleotide sequence ID" value="XM_006529748.3"/>
</dbReference>
<dbReference type="RefSeq" id="XP_006529812.1">
    <property type="nucleotide sequence ID" value="XM_006529749.3"/>
</dbReference>
<dbReference type="RefSeq" id="XP_006529813.1">
    <property type="nucleotide sequence ID" value="XM_006529750.3"/>
</dbReference>
<dbReference type="RefSeq" id="XP_006529814.1">
    <property type="nucleotide sequence ID" value="XM_006529751.2"/>
</dbReference>
<dbReference type="RefSeq" id="XP_006529815.1">
    <property type="nucleotide sequence ID" value="XM_006529752.1"/>
</dbReference>
<dbReference type="FunCoup" id="Q8VEB3">
    <property type="interactions" value="445"/>
</dbReference>
<dbReference type="STRING" id="10090.ENSMUSP00000051034"/>
<dbReference type="iPTMnet" id="Q8VEB3"/>
<dbReference type="PhosphoSitePlus" id="Q8VEB3"/>
<dbReference type="jPOST" id="Q8VEB3"/>
<dbReference type="PaxDb" id="10090-ENSMUSP00000051034"/>
<dbReference type="PeptideAtlas" id="Q8VEB3"/>
<dbReference type="ProteomicsDB" id="281524"/>
<dbReference type="Pumba" id="Q8VEB3"/>
<dbReference type="Antibodypedia" id="52940">
    <property type="antibodies" value="6 antibodies from 6 providers"/>
</dbReference>
<dbReference type="DNASU" id="52392"/>
<dbReference type="Ensembl" id="ENSMUST00000053033.14">
    <property type="protein sequence ID" value="ENSMUSP00000051034.8"/>
    <property type="gene ID" value="ENSMUSG00000044768.17"/>
</dbReference>
<dbReference type="Ensembl" id="ENSMUST00000149927.2">
    <property type="protein sequence ID" value="ENSMUSP00000121997.3"/>
    <property type="gene ID" value="ENSMUSG00000044768.17"/>
</dbReference>
<dbReference type="Ensembl" id="ENSMUST00000153115.8">
    <property type="protein sequence ID" value="ENSMUSP00000138031.2"/>
    <property type="gene ID" value="ENSMUSG00000044768.17"/>
</dbReference>
<dbReference type="GeneID" id="52392"/>
<dbReference type="KEGG" id="mmu:52392"/>
<dbReference type="UCSC" id="uc007cfg.2">
    <property type="organism name" value="mouse"/>
</dbReference>
<dbReference type="AGR" id="MGI:1277184"/>
<dbReference type="CTD" id="90355"/>
<dbReference type="MGI" id="MGI:1277184">
    <property type="gene designation" value="Macir"/>
</dbReference>
<dbReference type="VEuPathDB" id="HostDB:ENSMUSG00000044768"/>
<dbReference type="eggNOG" id="ENOG502QRGS">
    <property type="taxonomic scope" value="Eukaryota"/>
</dbReference>
<dbReference type="GeneTree" id="ENSGT00390000005782"/>
<dbReference type="HOGENOM" id="CLU_082309_0_0_1"/>
<dbReference type="InParanoid" id="Q8VEB3"/>
<dbReference type="OMA" id="LAHKCTG"/>
<dbReference type="OrthoDB" id="9859373at2759"/>
<dbReference type="PhylomeDB" id="Q8VEB3"/>
<dbReference type="TreeFam" id="TF331553"/>
<dbReference type="BioGRID-ORCS" id="52392">
    <property type="hits" value="3 hits in 77 CRISPR screens"/>
</dbReference>
<dbReference type="ChiTaRS" id="D1Ertd622e">
    <property type="organism name" value="mouse"/>
</dbReference>
<dbReference type="PRO" id="PR:Q8VEB3"/>
<dbReference type="Proteomes" id="UP000000589">
    <property type="component" value="Chromosome 1"/>
</dbReference>
<dbReference type="RNAct" id="Q8VEB3">
    <property type="molecule type" value="protein"/>
</dbReference>
<dbReference type="Bgee" id="ENSMUSG00000044768">
    <property type="expression patterns" value="Expressed in granulocyte and 266 other cell types or tissues"/>
</dbReference>
<dbReference type="ExpressionAtlas" id="Q8VEB3">
    <property type="expression patterns" value="baseline and differential"/>
</dbReference>
<dbReference type="GO" id="GO:0035869">
    <property type="term" value="C:ciliary transition zone"/>
    <property type="evidence" value="ECO:0000250"/>
    <property type="project" value="UniProtKB"/>
</dbReference>
<dbReference type="GO" id="GO:0005737">
    <property type="term" value="C:cytoplasm"/>
    <property type="evidence" value="ECO:0000250"/>
    <property type="project" value="UniProtKB"/>
</dbReference>
<dbReference type="GO" id="GO:0060271">
    <property type="term" value="P:cilium assembly"/>
    <property type="evidence" value="ECO:0000250"/>
    <property type="project" value="UniProtKB"/>
</dbReference>
<dbReference type="GO" id="GO:0010631">
    <property type="term" value="P:epithelial cell migration"/>
    <property type="evidence" value="ECO:0000315"/>
    <property type="project" value="MGI"/>
</dbReference>
<dbReference type="GO" id="GO:0010761">
    <property type="term" value="P:fibroblast migration"/>
    <property type="evidence" value="ECO:0000315"/>
    <property type="project" value="MGI"/>
</dbReference>
<dbReference type="GO" id="GO:0006954">
    <property type="term" value="P:inflammatory response"/>
    <property type="evidence" value="ECO:0007669"/>
    <property type="project" value="UniProtKB-KW"/>
</dbReference>
<dbReference type="GO" id="GO:1900016">
    <property type="term" value="P:negative regulation of cytokine production involved in inflammatory response"/>
    <property type="evidence" value="ECO:0000315"/>
    <property type="project" value="MGI"/>
</dbReference>
<dbReference type="GO" id="GO:0010633">
    <property type="term" value="P:negative regulation of epithelial cell migration"/>
    <property type="evidence" value="ECO:0000315"/>
    <property type="project" value="MGI"/>
</dbReference>
<dbReference type="GO" id="GO:0010764">
    <property type="term" value="P:negative regulation of fibroblast migration"/>
    <property type="evidence" value="ECO:0000315"/>
    <property type="project" value="MGI"/>
</dbReference>
<dbReference type="GO" id="GO:0050728">
    <property type="term" value="P:negative regulation of inflammatory response"/>
    <property type="evidence" value="ECO:0000250"/>
    <property type="project" value="UniProtKB"/>
</dbReference>
<dbReference type="GO" id="GO:0015031">
    <property type="term" value="P:protein transport"/>
    <property type="evidence" value="ECO:0007669"/>
    <property type="project" value="UniProtKB-KW"/>
</dbReference>
<dbReference type="InterPro" id="IPR029219">
    <property type="entry name" value="UNC119-bd"/>
</dbReference>
<dbReference type="PANTHER" id="PTHR31224:SF2">
    <property type="entry name" value="MACROPHAGE IMMUNOMETABOLISM REGULATOR"/>
    <property type="match status" value="1"/>
</dbReference>
<dbReference type="PANTHER" id="PTHR31224">
    <property type="entry name" value="UNC119-BINDING PROTEIN C5ORF30"/>
    <property type="match status" value="1"/>
</dbReference>
<dbReference type="Pfam" id="PF15435">
    <property type="entry name" value="UNC119_bdg"/>
    <property type="match status" value="1"/>
</dbReference>
<feature type="chain" id="PRO_0000316777" description="Macrophage immunometabolism regulator">
    <location>
        <begin position="1"/>
        <end position="207"/>
    </location>
</feature>
<feature type="region of interest" description="Disordered" evidence="2">
    <location>
        <begin position="1"/>
        <end position="41"/>
    </location>
</feature>
<feature type="modified residue" description="N-acetylmethionine" evidence="1">
    <location>
        <position position="1"/>
    </location>
</feature>
<feature type="modified residue" description="Phosphoserine" evidence="1">
    <location>
        <position position="25"/>
    </location>
</feature>
<feature type="modified residue" description="Phosphoserine" evidence="1">
    <location>
        <position position="167"/>
    </location>
</feature>
<feature type="sequence conflict" description="In Ref. 1; BAE22601." evidence="4" ref="1">
    <original>SK</original>
    <variation>MQ</variation>
    <location>
        <begin position="83"/>
        <end position="84"/>
    </location>
</feature>
<reference key="1">
    <citation type="journal article" date="2005" name="Science">
        <title>The transcriptional landscape of the mammalian genome.</title>
        <authorList>
            <person name="Carninci P."/>
            <person name="Kasukawa T."/>
            <person name="Katayama S."/>
            <person name="Gough J."/>
            <person name="Frith M.C."/>
            <person name="Maeda N."/>
            <person name="Oyama R."/>
            <person name="Ravasi T."/>
            <person name="Lenhard B."/>
            <person name="Wells C."/>
            <person name="Kodzius R."/>
            <person name="Shimokawa K."/>
            <person name="Bajic V.B."/>
            <person name="Brenner S.E."/>
            <person name="Batalov S."/>
            <person name="Forrest A.R."/>
            <person name="Zavolan M."/>
            <person name="Davis M.J."/>
            <person name="Wilming L.G."/>
            <person name="Aidinis V."/>
            <person name="Allen J.E."/>
            <person name="Ambesi-Impiombato A."/>
            <person name="Apweiler R."/>
            <person name="Aturaliya R.N."/>
            <person name="Bailey T.L."/>
            <person name="Bansal M."/>
            <person name="Baxter L."/>
            <person name="Beisel K.W."/>
            <person name="Bersano T."/>
            <person name="Bono H."/>
            <person name="Chalk A.M."/>
            <person name="Chiu K.P."/>
            <person name="Choudhary V."/>
            <person name="Christoffels A."/>
            <person name="Clutterbuck D.R."/>
            <person name="Crowe M.L."/>
            <person name="Dalla E."/>
            <person name="Dalrymple B.P."/>
            <person name="de Bono B."/>
            <person name="Della Gatta G."/>
            <person name="di Bernardo D."/>
            <person name="Down T."/>
            <person name="Engstrom P."/>
            <person name="Fagiolini M."/>
            <person name="Faulkner G."/>
            <person name="Fletcher C.F."/>
            <person name="Fukushima T."/>
            <person name="Furuno M."/>
            <person name="Futaki S."/>
            <person name="Gariboldi M."/>
            <person name="Georgii-Hemming P."/>
            <person name="Gingeras T.R."/>
            <person name="Gojobori T."/>
            <person name="Green R.E."/>
            <person name="Gustincich S."/>
            <person name="Harbers M."/>
            <person name="Hayashi Y."/>
            <person name="Hensch T.K."/>
            <person name="Hirokawa N."/>
            <person name="Hill D."/>
            <person name="Huminiecki L."/>
            <person name="Iacono M."/>
            <person name="Ikeo K."/>
            <person name="Iwama A."/>
            <person name="Ishikawa T."/>
            <person name="Jakt M."/>
            <person name="Kanapin A."/>
            <person name="Katoh M."/>
            <person name="Kawasawa Y."/>
            <person name="Kelso J."/>
            <person name="Kitamura H."/>
            <person name="Kitano H."/>
            <person name="Kollias G."/>
            <person name="Krishnan S.P."/>
            <person name="Kruger A."/>
            <person name="Kummerfeld S.K."/>
            <person name="Kurochkin I.V."/>
            <person name="Lareau L.F."/>
            <person name="Lazarevic D."/>
            <person name="Lipovich L."/>
            <person name="Liu J."/>
            <person name="Liuni S."/>
            <person name="McWilliam S."/>
            <person name="Madan Babu M."/>
            <person name="Madera M."/>
            <person name="Marchionni L."/>
            <person name="Matsuda H."/>
            <person name="Matsuzawa S."/>
            <person name="Miki H."/>
            <person name="Mignone F."/>
            <person name="Miyake S."/>
            <person name="Morris K."/>
            <person name="Mottagui-Tabar S."/>
            <person name="Mulder N."/>
            <person name="Nakano N."/>
            <person name="Nakauchi H."/>
            <person name="Ng P."/>
            <person name="Nilsson R."/>
            <person name="Nishiguchi S."/>
            <person name="Nishikawa S."/>
            <person name="Nori F."/>
            <person name="Ohara O."/>
            <person name="Okazaki Y."/>
            <person name="Orlando V."/>
            <person name="Pang K.C."/>
            <person name="Pavan W.J."/>
            <person name="Pavesi G."/>
            <person name="Pesole G."/>
            <person name="Petrovsky N."/>
            <person name="Piazza S."/>
            <person name="Reed J."/>
            <person name="Reid J.F."/>
            <person name="Ring B.Z."/>
            <person name="Ringwald M."/>
            <person name="Rost B."/>
            <person name="Ruan Y."/>
            <person name="Salzberg S.L."/>
            <person name="Sandelin A."/>
            <person name="Schneider C."/>
            <person name="Schoenbach C."/>
            <person name="Sekiguchi K."/>
            <person name="Semple C.A."/>
            <person name="Seno S."/>
            <person name="Sessa L."/>
            <person name="Sheng Y."/>
            <person name="Shibata Y."/>
            <person name="Shimada H."/>
            <person name="Shimada K."/>
            <person name="Silva D."/>
            <person name="Sinclair B."/>
            <person name="Sperling S."/>
            <person name="Stupka E."/>
            <person name="Sugiura K."/>
            <person name="Sultana R."/>
            <person name="Takenaka Y."/>
            <person name="Taki K."/>
            <person name="Tammoja K."/>
            <person name="Tan S.L."/>
            <person name="Tang S."/>
            <person name="Taylor M.S."/>
            <person name="Tegner J."/>
            <person name="Teichmann S.A."/>
            <person name="Ueda H.R."/>
            <person name="van Nimwegen E."/>
            <person name="Verardo R."/>
            <person name="Wei C.L."/>
            <person name="Yagi K."/>
            <person name="Yamanishi H."/>
            <person name="Zabarovsky E."/>
            <person name="Zhu S."/>
            <person name="Zimmer A."/>
            <person name="Hide W."/>
            <person name="Bult C."/>
            <person name="Grimmond S.M."/>
            <person name="Teasdale R.D."/>
            <person name="Liu E.T."/>
            <person name="Brusic V."/>
            <person name="Quackenbush J."/>
            <person name="Wahlestedt C."/>
            <person name="Mattick J.S."/>
            <person name="Hume D.A."/>
            <person name="Kai C."/>
            <person name="Sasaki D."/>
            <person name="Tomaru Y."/>
            <person name="Fukuda S."/>
            <person name="Kanamori-Katayama M."/>
            <person name="Suzuki M."/>
            <person name="Aoki J."/>
            <person name="Arakawa T."/>
            <person name="Iida J."/>
            <person name="Imamura K."/>
            <person name="Itoh M."/>
            <person name="Kato T."/>
            <person name="Kawaji H."/>
            <person name="Kawagashira N."/>
            <person name="Kawashima T."/>
            <person name="Kojima M."/>
            <person name="Kondo S."/>
            <person name="Konno H."/>
            <person name="Nakano K."/>
            <person name="Ninomiya N."/>
            <person name="Nishio T."/>
            <person name="Okada M."/>
            <person name="Plessy C."/>
            <person name="Shibata K."/>
            <person name="Shiraki T."/>
            <person name="Suzuki S."/>
            <person name="Tagami M."/>
            <person name="Waki K."/>
            <person name="Watahiki A."/>
            <person name="Okamura-Oho Y."/>
            <person name="Suzuki H."/>
            <person name="Kawai J."/>
            <person name="Hayashizaki Y."/>
        </authorList>
    </citation>
    <scope>NUCLEOTIDE SEQUENCE [LARGE SCALE MRNA]</scope>
    <source>
        <strain>C57BL/6J</strain>
        <tissue>Bone marrow</tissue>
        <tissue>Egg</tissue>
        <tissue>Liver</tissue>
        <tissue>Urinary bladder</tissue>
    </source>
</reference>
<reference key="2">
    <citation type="journal article" date="2004" name="Genome Res.">
        <title>The status, quality, and expansion of the NIH full-length cDNA project: the Mammalian Gene Collection (MGC).</title>
        <authorList>
            <consortium name="The MGC Project Team"/>
        </authorList>
    </citation>
    <scope>NUCLEOTIDE SEQUENCE [LARGE SCALE MRNA]</scope>
    <source>
        <strain>FVB/N</strain>
        <strain>FVB/N-3</strain>
        <tissue>Mammary tumor</tissue>
    </source>
</reference>
<reference key="3">
    <citation type="journal article" date="2011" name="Genes Dev.">
        <title>An ARL3-UNC119-RP2 GTPase cycle targets myristoylated NPHP3 to the primary cilium.</title>
        <authorList>
            <person name="Wright K.J."/>
            <person name="Baye L.M."/>
            <person name="Olivier-Mason A."/>
            <person name="Mukhopadhyay S."/>
            <person name="Sang L."/>
            <person name="Kwong M."/>
            <person name="Wang W."/>
            <person name="Pretorius P.R."/>
            <person name="Sheffield V.C."/>
            <person name="Sengupta P."/>
            <person name="Slusarski D.C."/>
            <person name="Jackson P.K."/>
        </authorList>
    </citation>
    <scope>TISSUE SPECIFICITY</scope>
</reference>
<protein>
    <recommendedName>
        <fullName evidence="5">Macrophage immunometabolism regulator</fullName>
    </recommendedName>
</protein>
<sequence>MEVDINGDSRSTLTTLPLPVAEGSSPGKAEAEKPRCSSTPCSPMRRTVSGYQILHMDSNYLVGFTTGEELLKLAQKCTGGEDSKGEAMPALRAKQLDTGLARSSRLYKTRSRYYQPYEIPAVNGRRRRRMPSSGDKCTKPLPYEPYKALHGPLPLCLLKGKRAHSKSLDYLNLDKMNIKEPADTEVLQYQLQHLTLRGDRVFARNNT</sequence>
<evidence type="ECO:0000250" key="1">
    <source>
        <dbReference type="UniProtKB" id="Q96GV9"/>
    </source>
</evidence>
<evidence type="ECO:0000256" key="2">
    <source>
        <dbReference type="SAM" id="MobiDB-lite"/>
    </source>
</evidence>
<evidence type="ECO:0000269" key="3">
    <source>
    </source>
</evidence>
<evidence type="ECO:0000305" key="4"/>
<evidence type="ECO:0000312" key="5">
    <source>
        <dbReference type="MGI" id="MGI:1277184"/>
    </source>
</evidence>
<proteinExistence type="evidence at transcript level"/>
<accession>Q8VEB3</accession>
<accession>Q3UXG2</accession>
<name>MACIR_MOUSE</name>
<gene>
    <name evidence="5" type="primary">Macir</name>
    <name evidence="5" type="synonym">D1Ertd622e</name>
</gene>